<feature type="chain" id="PRO_0000357392" description="Enolase-phosphatase E1">
    <location>
        <begin position="1"/>
        <end position="227"/>
    </location>
</feature>
<name>MTNC_PSEU2</name>
<proteinExistence type="inferred from homology"/>
<keyword id="KW-0028">Amino-acid biosynthesis</keyword>
<keyword id="KW-0378">Hydrolase</keyword>
<keyword id="KW-0460">Magnesium</keyword>
<keyword id="KW-0479">Metal-binding</keyword>
<keyword id="KW-0486">Methionine biosynthesis</keyword>
<organism>
    <name type="scientific">Pseudomonas syringae pv. syringae (strain B728a)</name>
    <dbReference type="NCBI Taxonomy" id="205918"/>
    <lineage>
        <taxon>Bacteria</taxon>
        <taxon>Pseudomonadati</taxon>
        <taxon>Pseudomonadota</taxon>
        <taxon>Gammaproteobacteria</taxon>
        <taxon>Pseudomonadales</taxon>
        <taxon>Pseudomonadaceae</taxon>
        <taxon>Pseudomonas</taxon>
        <taxon>Pseudomonas syringae</taxon>
    </lineage>
</organism>
<protein>
    <recommendedName>
        <fullName evidence="1">Enolase-phosphatase E1</fullName>
        <ecNumber evidence="1">3.1.3.77</ecNumber>
    </recommendedName>
    <alternativeName>
        <fullName evidence="1">2,3-diketo-5-methylthio-1-phosphopentane phosphatase</fullName>
    </alternativeName>
</protein>
<sequence>MPIKAILTDIEGTTSAVSFVFDVLFPFARKHLPAFVREHAEQPAVAQQLQAVRDLAGEPDADVERVIALLLEWIAEDRKATPLKALQGMVWEQGYNAGQLKGHVYPDAVDALKHWHQQGYRLYVYSSGSIQAQQLIFGCSEAGDLSGLFSGYFDTTSGPKREAQSYRTIAQAMDCPAGDILFLSDIVEELDAAQAAGMATCGLARDGGALAGHRYVTSFALIDPASF</sequence>
<dbReference type="EC" id="3.1.3.77" evidence="1"/>
<dbReference type="EMBL" id="CP000075">
    <property type="protein sequence ID" value="AAY36904.1"/>
    <property type="molecule type" value="Genomic_DNA"/>
</dbReference>
<dbReference type="RefSeq" id="WP_011267285.1">
    <property type="nucleotide sequence ID" value="NC_007005.1"/>
</dbReference>
<dbReference type="RefSeq" id="YP_234942.1">
    <property type="nucleotide sequence ID" value="NC_007005.1"/>
</dbReference>
<dbReference type="SMR" id="Q4ZVB8"/>
<dbReference type="STRING" id="205918.Psyr_1857"/>
<dbReference type="KEGG" id="psb:Psyr_1857"/>
<dbReference type="PATRIC" id="fig|205918.7.peg.1901"/>
<dbReference type="eggNOG" id="COG4229">
    <property type="taxonomic scope" value="Bacteria"/>
</dbReference>
<dbReference type="HOGENOM" id="CLU_023273_0_0_6"/>
<dbReference type="OrthoDB" id="9797416at2"/>
<dbReference type="UniPathway" id="UPA00904">
    <property type="reaction ID" value="UER00876"/>
</dbReference>
<dbReference type="UniPathway" id="UPA00904">
    <property type="reaction ID" value="UER00877"/>
</dbReference>
<dbReference type="Proteomes" id="UP000000426">
    <property type="component" value="Chromosome"/>
</dbReference>
<dbReference type="GO" id="GO:0043715">
    <property type="term" value="F:2,3-diketo-5-methylthiopentyl-1-phosphate enolase activity"/>
    <property type="evidence" value="ECO:0007669"/>
    <property type="project" value="UniProtKB-UniRule"/>
</dbReference>
<dbReference type="GO" id="GO:0043716">
    <property type="term" value="F:2-hydroxy-3-keto-5-methylthiopentenyl-1-phosphate phosphatase activity"/>
    <property type="evidence" value="ECO:0007669"/>
    <property type="project" value="UniProtKB-UniRule"/>
</dbReference>
<dbReference type="GO" id="GO:0043874">
    <property type="term" value="F:acireductone synthase activity"/>
    <property type="evidence" value="ECO:0007669"/>
    <property type="project" value="UniProtKB-EC"/>
</dbReference>
<dbReference type="GO" id="GO:0000287">
    <property type="term" value="F:magnesium ion binding"/>
    <property type="evidence" value="ECO:0007669"/>
    <property type="project" value="UniProtKB-UniRule"/>
</dbReference>
<dbReference type="GO" id="GO:0019509">
    <property type="term" value="P:L-methionine salvage from methylthioadenosine"/>
    <property type="evidence" value="ECO:0007669"/>
    <property type="project" value="UniProtKB-UniRule"/>
</dbReference>
<dbReference type="CDD" id="cd01629">
    <property type="entry name" value="HAD_EP"/>
    <property type="match status" value="1"/>
</dbReference>
<dbReference type="FunFam" id="1.10.720.60:FF:000003">
    <property type="entry name" value="Enolase-phosphatase E1"/>
    <property type="match status" value="1"/>
</dbReference>
<dbReference type="FunFam" id="3.40.50.1000:FF:000079">
    <property type="entry name" value="Enolase-phosphatase E1"/>
    <property type="match status" value="1"/>
</dbReference>
<dbReference type="Gene3D" id="1.10.720.60">
    <property type="match status" value="1"/>
</dbReference>
<dbReference type="Gene3D" id="3.40.50.1000">
    <property type="entry name" value="HAD superfamily/HAD-like"/>
    <property type="match status" value="1"/>
</dbReference>
<dbReference type="HAMAP" id="MF_01681">
    <property type="entry name" value="Salvage_MtnC"/>
    <property type="match status" value="1"/>
</dbReference>
<dbReference type="InterPro" id="IPR023943">
    <property type="entry name" value="Enolase-ppase_E1"/>
</dbReference>
<dbReference type="InterPro" id="IPR036412">
    <property type="entry name" value="HAD-like_sf"/>
</dbReference>
<dbReference type="InterPro" id="IPR006439">
    <property type="entry name" value="HAD-SF_hydro_IA"/>
</dbReference>
<dbReference type="InterPro" id="IPR023214">
    <property type="entry name" value="HAD_sf"/>
</dbReference>
<dbReference type="NCBIfam" id="TIGR01691">
    <property type="entry name" value="enolase-ppase"/>
    <property type="match status" value="1"/>
</dbReference>
<dbReference type="NCBIfam" id="TIGR01549">
    <property type="entry name" value="HAD-SF-IA-v1"/>
    <property type="match status" value="1"/>
</dbReference>
<dbReference type="PANTHER" id="PTHR20371">
    <property type="entry name" value="ENOLASE-PHOSPHATASE E1"/>
    <property type="match status" value="1"/>
</dbReference>
<dbReference type="PANTHER" id="PTHR20371:SF1">
    <property type="entry name" value="ENOLASE-PHOSPHATASE E1"/>
    <property type="match status" value="1"/>
</dbReference>
<dbReference type="Pfam" id="PF00702">
    <property type="entry name" value="Hydrolase"/>
    <property type="match status" value="1"/>
</dbReference>
<dbReference type="SFLD" id="SFLDF00044">
    <property type="entry name" value="enolase-phosphatase"/>
    <property type="match status" value="1"/>
</dbReference>
<dbReference type="SFLD" id="SFLDS00003">
    <property type="entry name" value="Haloacid_Dehalogenase"/>
    <property type="match status" value="1"/>
</dbReference>
<dbReference type="SUPFAM" id="SSF56784">
    <property type="entry name" value="HAD-like"/>
    <property type="match status" value="1"/>
</dbReference>
<reference key="1">
    <citation type="journal article" date="2005" name="Proc. Natl. Acad. Sci. U.S.A.">
        <title>Comparison of the complete genome sequences of Pseudomonas syringae pv. syringae B728a and pv. tomato DC3000.</title>
        <authorList>
            <person name="Feil H."/>
            <person name="Feil W.S."/>
            <person name="Chain P."/>
            <person name="Larimer F."/>
            <person name="Dibartolo G."/>
            <person name="Copeland A."/>
            <person name="Lykidis A."/>
            <person name="Trong S."/>
            <person name="Nolan M."/>
            <person name="Goltsman E."/>
            <person name="Thiel J."/>
            <person name="Malfatti S."/>
            <person name="Loper J.E."/>
            <person name="Lapidus A."/>
            <person name="Detter J.C."/>
            <person name="Land M."/>
            <person name="Richardson P.M."/>
            <person name="Kyrpides N.C."/>
            <person name="Ivanova N."/>
            <person name="Lindow S.E."/>
        </authorList>
    </citation>
    <scope>NUCLEOTIDE SEQUENCE [LARGE SCALE GENOMIC DNA]</scope>
    <source>
        <strain>B728a</strain>
    </source>
</reference>
<gene>
    <name evidence="1" type="primary">mtnC</name>
    <name type="ordered locus">Psyr_1857</name>
</gene>
<evidence type="ECO:0000255" key="1">
    <source>
        <dbReference type="HAMAP-Rule" id="MF_01681"/>
    </source>
</evidence>
<accession>Q4ZVB8</accession>
<comment type="function">
    <text evidence="1">Bifunctional enzyme that catalyzes the enolization of 2,3-diketo-5-methylthiopentyl-1-phosphate (DK-MTP-1-P) into the intermediate 2-hydroxy-3-keto-5-methylthiopentenyl-1-phosphate (HK-MTPenyl-1-P), which is then dephosphorylated to form the acireductone 1,2-dihydroxy-3-keto-5-methylthiopentene (DHK-MTPene).</text>
</comment>
<comment type="catalytic activity">
    <reaction evidence="1">
        <text>5-methylsulfanyl-2,3-dioxopentyl phosphate + H2O = 1,2-dihydroxy-5-(methylsulfanyl)pent-1-en-3-one + phosphate</text>
        <dbReference type="Rhea" id="RHEA:21700"/>
        <dbReference type="ChEBI" id="CHEBI:15377"/>
        <dbReference type="ChEBI" id="CHEBI:43474"/>
        <dbReference type="ChEBI" id="CHEBI:49252"/>
        <dbReference type="ChEBI" id="CHEBI:58828"/>
        <dbReference type="EC" id="3.1.3.77"/>
    </reaction>
</comment>
<comment type="cofactor">
    <cofactor evidence="1">
        <name>Mg(2+)</name>
        <dbReference type="ChEBI" id="CHEBI:18420"/>
    </cofactor>
    <text evidence="1">Binds 1 Mg(2+) ion per subunit.</text>
</comment>
<comment type="pathway">
    <text evidence="1">Amino-acid biosynthesis; L-methionine biosynthesis via salvage pathway; L-methionine from S-methyl-5-thio-alpha-D-ribose 1-phosphate: step 3/6.</text>
</comment>
<comment type="pathway">
    <text evidence="1">Amino-acid biosynthesis; L-methionine biosynthesis via salvage pathway; L-methionine from S-methyl-5-thio-alpha-D-ribose 1-phosphate: step 4/6.</text>
</comment>
<comment type="subunit">
    <text evidence="1">Monomer.</text>
</comment>
<comment type="similarity">
    <text evidence="1">Belongs to the HAD-like hydrolase superfamily. MasA/MtnC family.</text>
</comment>